<protein>
    <recommendedName>
        <fullName evidence="1">Serine--tRNA ligase</fullName>
        <ecNumber evidence="1">6.1.1.11</ecNumber>
    </recommendedName>
    <alternativeName>
        <fullName evidence="1">Seryl-tRNA synthetase</fullName>
        <shortName evidence="1">SerRS</shortName>
    </alternativeName>
    <alternativeName>
        <fullName evidence="1">Seryl-tRNA(Ser/Sec) synthetase</fullName>
    </alternativeName>
</protein>
<organism>
    <name type="scientific">Prochlorococcus marinus (strain MIT 9215)</name>
    <dbReference type="NCBI Taxonomy" id="93060"/>
    <lineage>
        <taxon>Bacteria</taxon>
        <taxon>Bacillati</taxon>
        <taxon>Cyanobacteriota</taxon>
        <taxon>Cyanophyceae</taxon>
        <taxon>Synechococcales</taxon>
        <taxon>Prochlorococcaceae</taxon>
        <taxon>Prochlorococcus</taxon>
    </lineage>
</organism>
<dbReference type="EC" id="6.1.1.11" evidence="1"/>
<dbReference type="EMBL" id="CP000825">
    <property type="protein sequence ID" value="ABV51017.1"/>
    <property type="molecule type" value="Genomic_DNA"/>
</dbReference>
<dbReference type="RefSeq" id="WP_012008065.1">
    <property type="nucleotide sequence ID" value="NC_009840.1"/>
</dbReference>
<dbReference type="SMR" id="A8G5Y6"/>
<dbReference type="STRING" id="93060.P9215_14021"/>
<dbReference type="KEGG" id="pmh:P9215_14021"/>
<dbReference type="eggNOG" id="COG0172">
    <property type="taxonomic scope" value="Bacteria"/>
</dbReference>
<dbReference type="HOGENOM" id="CLU_023797_1_1_3"/>
<dbReference type="OrthoDB" id="9804647at2"/>
<dbReference type="UniPathway" id="UPA00906">
    <property type="reaction ID" value="UER00895"/>
</dbReference>
<dbReference type="Proteomes" id="UP000002014">
    <property type="component" value="Chromosome"/>
</dbReference>
<dbReference type="GO" id="GO:0005737">
    <property type="term" value="C:cytoplasm"/>
    <property type="evidence" value="ECO:0007669"/>
    <property type="project" value="UniProtKB-SubCell"/>
</dbReference>
<dbReference type="GO" id="GO:0005524">
    <property type="term" value="F:ATP binding"/>
    <property type="evidence" value="ECO:0007669"/>
    <property type="project" value="UniProtKB-UniRule"/>
</dbReference>
<dbReference type="GO" id="GO:0004828">
    <property type="term" value="F:serine-tRNA ligase activity"/>
    <property type="evidence" value="ECO:0007669"/>
    <property type="project" value="UniProtKB-UniRule"/>
</dbReference>
<dbReference type="GO" id="GO:0016260">
    <property type="term" value="P:selenocysteine biosynthetic process"/>
    <property type="evidence" value="ECO:0007669"/>
    <property type="project" value="UniProtKB-UniRule"/>
</dbReference>
<dbReference type="GO" id="GO:0006434">
    <property type="term" value="P:seryl-tRNA aminoacylation"/>
    <property type="evidence" value="ECO:0007669"/>
    <property type="project" value="UniProtKB-UniRule"/>
</dbReference>
<dbReference type="CDD" id="cd00770">
    <property type="entry name" value="SerRS_core"/>
    <property type="match status" value="1"/>
</dbReference>
<dbReference type="Gene3D" id="3.30.930.10">
    <property type="entry name" value="Bira Bifunctional Protein, Domain 2"/>
    <property type="match status" value="1"/>
</dbReference>
<dbReference type="Gene3D" id="1.10.287.40">
    <property type="entry name" value="Serine-tRNA synthetase, tRNA binding domain"/>
    <property type="match status" value="1"/>
</dbReference>
<dbReference type="HAMAP" id="MF_00176">
    <property type="entry name" value="Ser_tRNA_synth_type1"/>
    <property type="match status" value="1"/>
</dbReference>
<dbReference type="InterPro" id="IPR002314">
    <property type="entry name" value="aa-tRNA-synt_IIb"/>
</dbReference>
<dbReference type="InterPro" id="IPR006195">
    <property type="entry name" value="aa-tRNA-synth_II"/>
</dbReference>
<dbReference type="InterPro" id="IPR045864">
    <property type="entry name" value="aa-tRNA-synth_II/BPL/LPL"/>
</dbReference>
<dbReference type="InterPro" id="IPR002317">
    <property type="entry name" value="Ser-tRNA-ligase_type_1"/>
</dbReference>
<dbReference type="InterPro" id="IPR015866">
    <property type="entry name" value="Ser-tRNA-synth_1_N"/>
</dbReference>
<dbReference type="InterPro" id="IPR042103">
    <property type="entry name" value="SerRS_1_N_sf"/>
</dbReference>
<dbReference type="InterPro" id="IPR033729">
    <property type="entry name" value="SerRS_core"/>
</dbReference>
<dbReference type="InterPro" id="IPR010978">
    <property type="entry name" value="tRNA-bd_arm"/>
</dbReference>
<dbReference type="NCBIfam" id="TIGR00414">
    <property type="entry name" value="serS"/>
    <property type="match status" value="1"/>
</dbReference>
<dbReference type="PANTHER" id="PTHR43697:SF1">
    <property type="entry name" value="SERINE--TRNA LIGASE"/>
    <property type="match status" value="1"/>
</dbReference>
<dbReference type="PANTHER" id="PTHR43697">
    <property type="entry name" value="SERYL-TRNA SYNTHETASE"/>
    <property type="match status" value="1"/>
</dbReference>
<dbReference type="Pfam" id="PF02403">
    <property type="entry name" value="Seryl_tRNA_N"/>
    <property type="match status" value="1"/>
</dbReference>
<dbReference type="Pfam" id="PF00587">
    <property type="entry name" value="tRNA-synt_2b"/>
    <property type="match status" value="1"/>
</dbReference>
<dbReference type="PIRSF" id="PIRSF001529">
    <property type="entry name" value="Ser-tRNA-synth_IIa"/>
    <property type="match status" value="1"/>
</dbReference>
<dbReference type="PRINTS" id="PR00981">
    <property type="entry name" value="TRNASYNTHSER"/>
</dbReference>
<dbReference type="SUPFAM" id="SSF55681">
    <property type="entry name" value="Class II aaRS and biotin synthetases"/>
    <property type="match status" value="1"/>
</dbReference>
<dbReference type="SUPFAM" id="SSF46589">
    <property type="entry name" value="tRNA-binding arm"/>
    <property type="match status" value="1"/>
</dbReference>
<dbReference type="PROSITE" id="PS50862">
    <property type="entry name" value="AA_TRNA_LIGASE_II"/>
    <property type="match status" value="1"/>
</dbReference>
<proteinExistence type="inferred from homology"/>
<sequence length="425" mass="48213">MLDQKLIRENPTSVEENLSLRGKVYNISHIHELTVKKKDIDIKISSLQSESKKLSKLIGQEISKSKNNDSPELISLKKKGNEYRIKISELEEKQRILDKEVDDEIYNLPNFPSKNAPIGKDENDNIQVKTWGNPLKDENLKSHWEIGESLNIFDSVKSTKISKSRFVTLIGNGARLERALINFMLDMHTKNGYLELMPPALVNSESLKGSGQLPKFSNESFKCSNDDLWLSPTAEVPLTAFHRNELIDPKQLPIKYVAYSPCFRREAGSYGKDTKGLIRLHQFNKVELYWFCDPTKSLEAHKKITSDAENIFKKLNLPYRIVDICTGDLGFSSSRTFDLEVWLPSSKCYREISSCSNCLDFQARRSSIRSKIDKKNIYLHTLNGSGLAIGRTMAAILENGQQTDGSVKIPDALVPYFGSNFLKNA</sequence>
<feature type="chain" id="PRO_1000058355" description="Serine--tRNA ligase">
    <location>
        <begin position="1"/>
        <end position="425"/>
    </location>
</feature>
<feature type="binding site" evidence="1">
    <location>
        <begin position="233"/>
        <end position="235"/>
    </location>
    <ligand>
        <name>L-serine</name>
        <dbReference type="ChEBI" id="CHEBI:33384"/>
    </ligand>
</feature>
<feature type="binding site" evidence="1">
    <location>
        <begin position="264"/>
        <end position="266"/>
    </location>
    <ligand>
        <name>ATP</name>
        <dbReference type="ChEBI" id="CHEBI:30616"/>
    </ligand>
</feature>
<feature type="binding site" evidence="1">
    <location>
        <position position="287"/>
    </location>
    <ligand>
        <name>L-serine</name>
        <dbReference type="ChEBI" id="CHEBI:33384"/>
    </ligand>
</feature>
<feature type="binding site" evidence="1">
    <location>
        <begin position="351"/>
        <end position="354"/>
    </location>
    <ligand>
        <name>ATP</name>
        <dbReference type="ChEBI" id="CHEBI:30616"/>
    </ligand>
</feature>
<feature type="binding site" evidence="1">
    <location>
        <position position="385"/>
    </location>
    <ligand>
        <name>L-serine</name>
        <dbReference type="ChEBI" id="CHEBI:33384"/>
    </ligand>
</feature>
<comment type="function">
    <text evidence="1">Catalyzes the attachment of serine to tRNA(Ser). Is also able to aminoacylate tRNA(Sec) with serine, to form the misacylated tRNA L-seryl-tRNA(Sec), which will be further converted into selenocysteinyl-tRNA(Sec).</text>
</comment>
<comment type="catalytic activity">
    <reaction evidence="1">
        <text>tRNA(Ser) + L-serine + ATP = L-seryl-tRNA(Ser) + AMP + diphosphate + H(+)</text>
        <dbReference type="Rhea" id="RHEA:12292"/>
        <dbReference type="Rhea" id="RHEA-COMP:9669"/>
        <dbReference type="Rhea" id="RHEA-COMP:9703"/>
        <dbReference type="ChEBI" id="CHEBI:15378"/>
        <dbReference type="ChEBI" id="CHEBI:30616"/>
        <dbReference type="ChEBI" id="CHEBI:33019"/>
        <dbReference type="ChEBI" id="CHEBI:33384"/>
        <dbReference type="ChEBI" id="CHEBI:78442"/>
        <dbReference type="ChEBI" id="CHEBI:78533"/>
        <dbReference type="ChEBI" id="CHEBI:456215"/>
        <dbReference type="EC" id="6.1.1.11"/>
    </reaction>
</comment>
<comment type="catalytic activity">
    <reaction evidence="1">
        <text>tRNA(Sec) + L-serine + ATP = L-seryl-tRNA(Sec) + AMP + diphosphate + H(+)</text>
        <dbReference type="Rhea" id="RHEA:42580"/>
        <dbReference type="Rhea" id="RHEA-COMP:9742"/>
        <dbReference type="Rhea" id="RHEA-COMP:10128"/>
        <dbReference type="ChEBI" id="CHEBI:15378"/>
        <dbReference type="ChEBI" id="CHEBI:30616"/>
        <dbReference type="ChEBI" id="CHEBI:33019"/>
        <dbReference type="ChEBI" id="CHEBI:33384"/>
        <dbReference type="ChEBI" id="CHEBI:78442"/>
        <dbReference type="ChEBI" id="CHEBI:78533"/>
        <dbReference type="ChEBI" id="CHEBI:456215"/>
        <dbReference type="EC" id="6.1.1.11"/>
    </reaction>
</comment>
<comment type="pathway">
    <text evidence="1">Aminoacyl-tRNA biosynthesis; selenocysteinyl-tRNA(Sec) biosynthesis; L-seryl-tRNA(Sec) from L-serine and tRNA(Sec): step 1/1.</text>
</comment>
<comment type="subunit">
    <text evidence="1">Homodimer. The tRNA molecule binds across the dimer.</text>
</comment>
<comment type="subcellular location">
    <subcellularLocation>
        <location evidence="1">Cytoplasm</location>
    </subcellularLocation>
</comment>
<comment type="domain">
    <text evidence="1">Consists of two distinct domains, a catalytic core and a N-terminal extension that is involved in tRNA binding.</text>
</comment>
<comment type="similarity">
    <text evidence="1">Belongs to the class-II aminoacyl-tRNA synthetase family. Type-1 seryl-tRNA synthetase subfamily.</text>
</comment>
<evidence type="ECO:0000255" key="1">
    <source>
        <dbReference type="HAMAP-Rule" id="MF_00176"/>
    </source>
</evidence>
<keyword id="KW-0030">Aminoacyl-tRNA synthetase</keyword>
<keyword id="KW-0067">ATP-binding</keyword>
<keyword id="KW-0963">Cytoplasm</keyword>
<keyword id="KW-0436">Ligase</keyword>
<keyword id="KW-0547">Nucleotide-binding</keyword>
<keyword id="KW-0648">Protein biosynthesis</keyword>
<reference key="1">
    <citation type="journal article" date="2007" name="PLoS Genet.">
        <title>Patterns and implications of gene gain and loss in the evolution of Prochlorococcus.</title>
        <authorList>
            <person name="Kettler G.C."/>
            <person name="Martiny A.C."/>
            <person name="Huang K."/>
            <person name="Zucker J."/>
            <person name="Coleman M.L."/>
            <person name="Rodrigue S."/>
            <person name="Chen F."/>
            <person name="Lapidus A."/>
            <person name="Ferriera S."/>
            <person name="Johnson J."/>
            <person name="Steglich C."/>
            <person name="Church G.M."/>
            <person name="Richardson P."/>
            <person name="Chisholm S.W."/>
        </authorList>
    </citation>
    <scope>NUCLEOTIDE SEQUENCE [LARGE SCALE GENOMIC DNA]</scope>
    <source>
        <strain>MIT 9215</strain>
    </source>
</reference>
<name>SYS_PROM2</name>
<gene>
    <name evidence="1" type="primary">serS</name>
    <name type="ordered locus">P9215_14021</name>
</gene>
<accession>A8G5Y6</accession>